<keyword id="KW-0131">Cell cycle</keyword>
<keyword id="KW-0132">Cell division</keyword>
<keyword id="KW-0997">Cell inner membrane</keyword>
<keyword id="KW-1003">Cell membrane</keyword>
<keyword id="KW-0133">Cell shape</keyword>
<keyword id="KW-0961">Cell wall biogenesis/degradation</keyword>
<keyword id="KW-0328">Glycosyltransferase</keyword>
<keyword id="KW-0472">Membrane</keyword>
<keyword id="KW-0573">Peptidoglycan synthesis</keyword>
<keyword id="KW-0808">Transferase</keyword>
<comment type="function">
    <text evidence="1">Cell wall formation. Catalyzes the transfer of a GlcNAc subunit on undecaprenyl-pyrophosphoryl-MurNAc-pentapeptide (lipid intermediate I) to form undecaprenyl-pyrophosphoryl-MurNAc-(pentapeptide)GlcNAc (lipid intermediate II).</text>
</comment>
<comment type="catalytic activity">
    <reaction evidence="1">
        <text>di-trans,octa-cis-undecaprenyl diphospho-N-acetyl-alpha-D-muramoyl-L-alanyl-D-glutamyl-meso-2,6-diaminopimeloyl-D-alanyl-D-alanine + UDP-N-acetyl-alpha-D-glucosamine = di-trans,octa-cis-undecaprenyl diphospho-[N-acetyl-alpha-D-glucosaminyl-(1-&gt;4)]-N-acetyl-alpha-D-muramoyl-L-alanyl-D-glutamyl-meso-2,6-diaminopimeloyl-D-alanyl-D-alanine + UDP + H(+)</text>
        <dbReference type="Rhea" id="RHEA:31227"/>
        <dbReference type="ChEBI" id="CHEBI:15378"/>
        <dbReference type="ChEBI" id="CHEBI:57705"/>
        <dbReference type="ChEBI" id="CHEBI:58223"/>
        <dbReference type="ChEBI" id="CHEBI:61387"/>
        <dbReference type="ChEBI" id="CHEBI:61388"/>
        <dbReference type="EC" id="2.4.1.227"/>
    </reaction>
</comment>
<comment type="pathway">
    <text evidence="1">Cell wall biogenesis; peptidoglycan biosynthesis.</text>
</comment>
<comment type="subcellular location">
    <subcellularLocation>
        <location evidence="1">Cell inner membrane</location>
        <topology evidence="1">Peripheral membrane protein</topology>
        <orientation evidence="1">Cytoplasmic side</orientation>
    </subcellularLocation>
</comment>
<comment type="similarity">
    <text evidence="1">Belongs to the glycosyltransferase 28 family. MurG subfamily.</text>
</comment>
<name>MURG_PSEU2</name>
<proteinExistence type="inferred from homology"/>
<feature type="chain" id="PRO_0000225085" description="UDP-N-acetylglucosamine--N-acetylmuramyl-(pentapeptide) pyrophosphoryl-undecaprenol N-acetylglucosamine transferase">
    <location>
        <begin position="1"/>
        <end position="356"/>
    </location>
</feature>
<feature type="binding site" evidence="1">
    <location>
        <begin position="12"/>
        <end position="14"/>
    </location>
    <ligand>
        <name>UDP-N-acetyl-alpha-D-glucosamine</name>
        <dbReference type="ChEBI" id="CHEBI:57705"/>
    </ligand>
</feature>
<feature type="binding site" evidence="1">
    <location>
        <position position="124"/>
    </location>
    <ligand>
        <name>UDP-N-acetyl-alpha-D-glucosamine</name>
        <dbReference type="ChEBI" id="CHEBI:57705"/>
    </ligand>
</feature>
<feature type="binding site" evidence="1">
    <location>
        <position position="163"/>
    </location>
    <ligand>
        <name>UDP-N-acetyl-alpha-D-glucosamine</name>
        <dbReference type="ChEBI" id="CHEBI:57705"/>
    </ligand>
</feature>
<feature type="binding site" evidence="1">
    <location>
        <position position="188"/>
    </location>
    <ligand>
        <name>UDP-N-acetyl-alpha-D-glucosamine</name>
        <dbReference type="ChEBI" id="CHEBI:57705"/>
    </ligand>
</feature>
<feature type="binding site" evidence="1">
    <location>
        <position position="242"/>
    </location>
    <ligand>
        <name>UDP-N-acetyl-alpha-D-glucosamine</name>
        <dbReference type="ChEBI" id="CHEBI:57705"/>
    </ligand>
</feature>
<feature type="binding site" evidence="1">
    <location>
        <position position="287"/>
    </location>
    <ligand>
        <name>UDP-N-acetyl-alpha-D-glucosamine</name>
        <dbReference type="ChEBI" id="CHEBI:57705"/>
    </ligand>
</feature>
<sequence>MDANVLIMAGGTGGHVFPALACAREFQARGYKVHWLGTPRGIENELVPQAGLTLHLINVTGLRGKGRLSLLKAPLMLLKALMQARKVVRQVKPVCVVGFGGYVTGPGGLAAKLAGVPLIIHEQNAVAGTANRSLASFASRVCEAFPNTFADSSKRRTTGNPVRVELFLETPRQALAGRKARLLVLGGSLGAEPLNKLLPEALSQLPQDIQPEVFHQSGKNHDAVTAERYRNVGVEAQVAPFIQNMAQAYGWADLVVCRAGALTISELAAAGLPSLLIPLPHAIDDHQSRNADYLAREGAAFVMPQATTGAAEMAARLKEVLMQPEQLNSMARTARSLAKPDATRTVVNVCVEVAHG</sequence>
<dbReference type="EC" id="2.4.1.227" evidence="1"/>
<dbReference type="EMBL" id="CP000075">
    <property type="protein sequence ID" value="AAY39132.1"/>
    <property type="molecule type" value="Genomic_DNA"/>
</dbReference>
<dbReference type="RefSeq" id="WP_003406015.1">
    <property type="nucleotide sequence ID" value="NC_007005.1"/>
</dbReference>
<dbReference type="RefSeq" id="YP_237170.1">
    <property type="nucleotide sequence ID" value="NC_007005.1"/>
</dbReference>
<dbReference type="SMR" id="Q4ZNZ0"/>
<dbReference type="STRING" id="205918.Psyr_4102"/>
<dbReference type="CAZy" id="GT28">
    <property type="family name" value="Glycosyltransferase Family 28"/>
</dbReference>
<dbReference type="KEGG" id="psb:Psyr_4102"/>
<dbReference type="PATRIC" id="fig|205918.7.peg.4220"/>
<dbReference type="eggNOG" id="COG0707">
    <property type="taxonomic scope" value="Bacteria"/>
</dbReference>
<dbReference type="HOGENOM" id="CLU_037404_2_0_6"/>
<dbReference type="OrthoDB" id="9808936at2"/>
<dbReference type="UniPathway" id="UPA00219"/>
<dbReference type="Proteomes" id="UP000000426">
    <property type="component" value="Chromosome"/>
</dbReference>
<dbReference type="GO" id="GO:0005886">
    <property type="term" value="C:plasma membrane"/>
    <property type="evidence" value="ECO:0007669"/>
    <property type="project" value="UniProtKB-SubCell"/>
</dbReference>
<dbReference type="GO" id="GO:0051991">
    <property type="term" value="F:UDP-N-acetyl-D-glucosamine:N-acetylmuramoyl-L-alanyl-D-glutamyl-meso-2,6-diaminopimelyl-D-alanyl-D-alanine-diphosphoundecaprenol 4-beta-N-acetylglucosaminlytransferase activity"/>
    <property type="evidence" value="ECO:0007669"/>
    <property type="project" value="RHEA"/>
</dbReference>
<dbReference type="GO" id="GO:0050511">
    <property type="term" value="F:undecaprenyldiphospho-muramoylpentapeptide beta-N-acetylglucosaminyltransferase activity"/>
    <property type="evidence" value="ECO:0007669"/>
    <property type="project" value="UniProtKB-UniRule"/>
</dbReference>
<dbReference type="GO" id="GO:0005975">
    <property type="term" value="P:carbohydrate metabolic process"/>
    <property type="evidence" value="ECO:0007669"/>
    <property type="project" value="InterPro"/>
</dbReference>
<dbReference type="GO" id="GO:0051301">
    <property type="term" value="P:cell division"/>
    <property type="evidence" value="ECO:0007669"/>
    <property type="project" value="UniProtKB-KW"/>
</dbReference>
<dbReference type="GO" id="GO:0071555">
    <property type="term" value="P:cell wall organization"/>
    <property type="evidence" value="ECO:0007669"/>
    <property type="project" value="UniProtKB-KW"/>
</dbReference>
<dbReference type="GO" id="GO:0030259">
    <property type="term" value="P:lipid glycosylation"/>
    <property type="evidence" value="ECO:0007669"/>
    <property type="project" value="UniProtKB-UniRule"/>
</dbReference>
<dbReference type="GO" id="GO:0009252">
    <property type="term" value="P:peptidoglycan biosynthetic process"/>
    <property type="evidence" value="ECO:0007669"/>
    <property type="project" value="UniProtKB-UniRule"/>
</dbReference>
<dbReference type="GO" id="GO:0008360">
    <property type="term" value="P:regulation of cell shape"/>
    <property type="evidence" value="ECO:0007669"/>
    <property type="project" value="UniProtKB-KW"/>
</dbReference>
<dbReference type="CDD" id="cd03785">
    <property type="entry name" value="GT28_MurG"/>
    <property type="match status" value="1"/>
</dbReference>
<dbReference type="Gene3D" id="3.40.50.2000">
    <property type="entry name" value="Glycogen Phosphorylase B"/>
    <property type="match status" value="2"/>
</dbReference>
<dbReference type="HAMAP" id="MF_00033">
    <property type="entry name" value="MurG"/>
    <property type="match status" value="1"/>
</dbReference>
<dbReference type="InterPro" id="IPR006009">
    <property type="entry name" value="GlcNAc_MurG"/>
</dbReference>
<dbReference type="InterPro" id="IPR007235">
    <property type="entry name" value="Glyco_trans_28_C"/>
</dbReference>
<dbReference type="InterPro" id="IPR004276">
    <property type="entry name" value="GlycoTrans_28_N"/>
</dbReference>
<dbReference type="NCBIfam" id="TIGR01133">
    <property type="entry name" value="murG"/>
    <property type="match status" value="1"/>
</dbReference>
<dbReference type="PANTHER" id="PTHR21015:SF22">
    <property type="entry name" value="GLYCOSYLTRANSFERASE"/>
    <property type="match status" value="1"/>
</dbReference>
<dbReference type="PANTHER" id="PTHR21015">
    <property type="entry name" value="UDP-N-ACETYLGLUCOSAMINE--N-ACETYLMURAMYL-(PENTAPEPTIDE) PYROPHOSPHORYL-UNDECAPRENOL N-ACETYLGLUCOSAMINE TRANSFERASE 1"/>
    <property type="match status" value="1"/>
</dbReference>
<dbReference type="Pfam" id="PF04101">
    <property type="entry name" value="Glyco_tran_28_C"/>
    <property type="match status" value="1"/>
</dbReference>
<dbReference type="Pfam" id="PF03033">
    <property type="entry name" value="Glyco_transf_28"/>
    <property type="match status" value="1"/>
</dbReference>
<dbReference type="SUPFAM" id="SSF53756">
    <property type="entry name" value="UDP-Glycosyltransferase/glycogen phosphorylase"/>
    <property type="match status" value="1"/>
</dbReference>
<gene>
    <name evidence="1" type="primary">murG</name>
    <name type="ordered locus">Psyr_4102</name>
</gene>
<organism>
    <name type="scientific">Pseudomonas syringae pv. syringae (strain B728a)</name>
    <dbReference type="NCBI Taxonomy" id="205918"/>
    <lineage>
        <taxon>Bacteria</taxon>
        <taxon>Pseudomonadati</taxon>
        <taxon>Pseudomonadota</taxon>
        <taxon>Gammaproteobacteria</taxon>
        <taxon>Pseudomonadales</taxon>
        <taxon>Pseudomonadaceae</taxon>
        <taxon>Pseudomonas</taxon>
        <taxon>Pseudomonas syringae</taxon>
    </lineage>
</organism>
<accession>Q4ZNZ0</accession>
<protein>
    <recommendedName>
        <fullName evidence="1">UDP-N-acetylglucosamine--N-acetylmuramyl-(pentapeptide) pyrophosphoryl-undecaprenol N-acetylglucosamine transferase</fullName>
        <ecNumber evidence="1">2.4.1.227</ecNumber>
    </recommendedName>
    <alternativeName>
        <fullName evidence="1">Undecaprenyl-PP-MurNAc-pentapeptide-UDPGlcNAc GlcNAc transferase</fullName>
    </alternativeName>
</protein>
<evidence type="ECO:0000255" key="1">
    <source>
        <dbReference type="HAMAP-Rule" id="MF_00033"/>
    </source>
</evidence>
<reference key="1">
    <citation type="journal article" date="2005" name="Proc. Natl. Acad. Sci. U.S.A.">
        <title>Comparison of the complete genome sequences of Pseudomonas syringae pv. syringae B728a and pv. tomato DC3000.</title>
        <authorList>
            <person name="Feil H."/>
            <person name="Feil W.S."/>
            <person name="Chain P."/>
            <person name="Larimer F."/>
            <person name="Dibartolo G."/>
            <person name="Copeland A."/>
            <person name="Lykidis A."/>
            <person name="Trong S."/>
            <person name="Nolan M."/>
            <person name="Goltsman E."/>
            <person name="Thiel J."/>
            <person name="Malfatti S."/>
            <person name="Loper J.E."/>
            <person name="Lapidus A."/>
            <person name="Detter J.C."/>
            <person name="Land M."/>
            <person name="Richardson P.M."/>
            <person name="Kyrpides N.C."/>
            <person name="Ivanova N."/>
            <person name="Lindow S.E."/>
        </authorList>
    </citation>
    <scope>NUCLEOTIDE SEQUENCE [LARGE SCALE GENOMIC DNA]</scope>
    <source>
        <strain>B728a</strain>
    </source>
</reference>